<proteinExistence type="inferred from homology"/>
<gene>
    <name type="primary">azo1</name>
    <name type="ordered locus">SAS0518</name>
</gene>
<evidence type="ECO:0000250" key="1"/>
<evidence type="ECO:0000305" key="2"/>
<name>AZO1_STAAS</name>
<feature type="chain" id="PRO_0000245995" description="FMN-dependent NADPH-azoreductase">
    <location>
        <begin position="1"/>
        <end position="188"/>
    </location>
</feature>
<keyword id="KW-0285">Flavoprotein</keyword>
<keyword id="KW-0288">FMN</keyword>
<keyword id="KW-0521">NADP</keyword>
<keyword id="KW-0560">Oxidoreductase</keyword>
<comment type="function">
    <text evidence="1">Catalyzes the reductive cleavage of azo bond in aromatic azo compounds to the corresponding amines. Requires NADPH, but not NADH, as an electron donor for its activity (By similarity).</text>
</comment>
<comment type="cofactor">
    <cofactor evidence="1">
        <name>FMN</name>
        <dbReference type="ChEBI" id="CHEBI:58210"/>
    </cofactor>
</comment>
<comment type="subunit">
    <text evidence="1">Homotetramer.</text>
</comment>
<comment type="similarity">
    <text evidence="2">Belongs to the azoreductase type 2 family.</text>
</comment>
<organism>
    <name type="scientific">Staphylococcus aureus (strain MSSA476)</name>
    <dbReference type="NCBI Taxonomy" id="282459"/>
    <lineage>
        <taxon>Bacteria</taxon>
        <taxon>Bacillati</taxon>
        <taxon>Bacillota</taxon>
        <taxon>Bacilli</taxon>
        <taxon>Bacillales</taxon>
        <taxon>Staphylococcaceae</taxon>
        <taxon>Staphylococcus</taxon>
    </lineage>
</organism>
<reference key="1">
    <citation type="journal article" date="2004" name="Proc. Natl. Acad. Sci. U.S.A.">
        <title>Complete genomes of two clinical Staphylococcus aureus strains: evidence for the rapid evolution of virulence and drug resistance.</title>
        <authorList>
            <person name="Holden M.T.G."/>
            <person name="Feil E.J."/>
            <person name="Lindsay J.A."/>
            <person name="Peacock S.J."/>
            <person name="Day N.P.J."/>
            <person name="Enright M.C."/>
            <person name="Foster T.J."/>
            <person name="Moore C.E."/>
            <person name="Hurst L."/>
            <person name="Atkin R."/>
            <person name="Barron A."/>
            <person name="Bason N."/>
            <person name="Bentley S.D."/>
            <person name="Chillingworth C."/>
            <person name="Chillingworth T."/>
            <person name="Churcher C."/>
            <person name="Clark L."/>
            <person name="Corton C."/>
            <person name="Cronin A."/>
            <person name="Doggett J."/>
            <person name="Dowd L."/>
            <person name="Feltwell T."/>
            <person name="Hance Z."/>
            <person name="Harris B."/>
            <person name="Hauser H."/>
            <person name="Holroyd S."/>
            <person name="Jagels K."/>
            <person name="James K.D."/>
            <person name="Lennard N."/>
            <person name="Line A."/>
            <person name="Mayes R."/>
            <person name="Moule S."/>
            <person name="Mungall K."/>
            <person name="Ormond D."/>
            <person name="Quail M.A."/>
            <person name="Rabbinowitsch E."/>
            <person name="Rutherford K.M."/>
            <person name="Sanders M."/>
            <person name="Sharp S."/>
            <person name="Simmonds M."/>
            <person name="Stevens K."/>
            <person name="Whitehead S."/>
            <person name="Barrell B.G."/>
            <person name="Spratt B.G."/>
            <person name="Parkhill J."/>
        </authorList>
    </citation>
    <scope>NUCLEOTIDE SEQUENCE [LARGE SCALE GENOMIC DNA]</scope>
    <source>
        <strain>MSSA476</strain>
    </source>
</reference>
<dbReference type="EC" id="1.7.-.-"/>
<dbReference type="EMBL" id="BX571857">
    <property type="protein sequence ID" value="CAG42293.1"/>
    <property type="molecule type" value="Genomic_DNA"/>
</dbReference>
<dbReference type="RefSeq" id="WP_000677261.1">
    <property type="nucleotide sequence ID" value="NC_002953.3"/>
</dbReference>
<dbReference type="SMR" id="Q6GBS7"/>
<dbReference type="KEGG" id="sas:SAS0518"/>
<dbReference type="HOGENOM" id="CLU_055322_1_2_9"/>
<dbReference type="GO" id="GO:0005829">
    <property type="term" value="C:cytosol"/>
    <property type="evidence" value="ECO:0007669"/>
    <property type="project" value="TreeGrafter"/>
</dbReference>
<dbReference type="GO" id="GO:0010181">
    <property type="term" value="F:FMN binding"/>
    <property type="evidence" value="ECO:0007669"/>
    <property type="project" value="TreeGrafter"/>
</dbReference>
<dbReference type="GO" id="GO:0016491">
    <property type="term" value="F:oxidoreductase activity"/>
    <property type="evidence" value="ECO:0007669"/>
    <property type="project" value="UniProtKB-KW"/>
</dbReference>
<dbReference type="Gene3D" id="3.40.50.360">
    <property type="match status" value="1"/>
</dbReference>
<dbReference type="InterPro" id="IPR029039">
    <property type="entry name" value="Flavoprotein-like_sf"/>
</dbReference>
<dbReference type="InterPro" id="IPR005025">
    <property type="entry name" value="FMN_Rdtase-like_dom"/>
</dbReference>
<dbReference type="InterPro" id="IPR050712">
    <property type="entry name" value="NAD(P)H-dep_reductase"/>
</dbReference>
<dbReference type="PANTHER" id="PTHR30543">
    <property type="entry name" value="CHROMATE REDUCTASE"/>
    <property type="match status" value="1"/>
</dbReference>
<dbReference type="PANTHER" id="PTHR30543:SF21">
    <property type="entry name" value="NAD(P)H-DEPENDENT FMN REDUCTASE LOT6"/>
    <property type="match status" value="1"/>
</dbReference>
<dbReference type="Pfam" id="PF03358">
    <property type="entry name" value="FMN_red"/>
    <property type="match status" value="1"/>
</dbReference>
<dbReference type="SUPFAM" id="SSF52218">
    <property type="entry name" value="Flavoproteins"/>
    <property type="match status" value="1"/>
</dbReference>
<accession>Q6GBS7</accession>
<sequence length="188" mass="20912">MKGLIIIGSAQVNSHTSALARYLTEHFKTHDIEAEIFDLAEKPLNQLDFSGTTPSIDEIKQNMKDLKEKAMAADFLILGTPNYHGSYSGILKNALDHLNMDYFKMKPVGLIGNSGGIVSSEPLSHLRVIVRSLLGIAVPTQIATHDSDFAKNEDGSYYLNDSEFQLRARLFVDQIVSFVNNSPYEHLK</sequence>
<protein>
    <recommendedName>
        <fullName>FMN-dependent NADPH-azoreductase</fullName>
        <ecNumber>1.7.-.-</ecNumber>
    </recommendedName>
    <alternativeName>
        <fullName>NADPH-dependent flavo-azoreductase</fullName>
    </alternativeName>
    <alternativeName>
        <fullName>NADPH-flavin azoreductase</fullName>
    </alternativeName>
</protein>